<feature type="chain" id="PRO_1000048954" description="Large ribosomal subunit protein bL20">
    <location>
        <begin position="1"/>
        <end position="117"/>
    </location>
</feature>
<reference key="1">
    <citation type="journal article" date="2011" name="Stand. Genomic Sci.">
        <title>Complete genome sequence of the halophilic and highly halotolerant Chromohalobacter salexigens type strain (1H11(T)).</title>
        <authorList>
            <person name="Copeland A."/>
            <person name="O'Connor K."/>
            <person name="Lucas S."/>
            <person name="Lapidus A."/>
            <person name="Berry K.W."/>
            <person name="Detter J.C."/>
            <person name="Del Rio T.G."/>
            <person name="Hammon N."/>
            <person name="Dalin E."/>
            <person name="Tice H."/>
            <person name="Pitluck S."/>
            <person name="Bruce D."/>
            <person name="Goodwin L."/>
            <person name="Han C."/>
            <person name="Tapia R."/>
            <person name="Saunders E."/>
            <person name="Schmutz J."/>
            <person name="Brettin T."/>
            <person name="Larimer F."/>
            <person name="Land M."/>
            <person name="Hauser L."/>
            <person name="Vargas C."/>
            <person name="Nieto J.J."/>
            <person name="Kyrpides N.C."/>
            <person name="Ivanova N."/>
            <person name="Goker M."/>
            <person name="Klenk H.P."/>
            <person name="Csonka L.N."/>
            <person name="Woyke T."/>
        </authorList>
    </citation>
    <scope>NUCLEOTIDE SEQUENCE [LARGE SCALE GENOMIC DNA]</scope>
    <source>
        <strain>ATCC BAA-138 / DSM 3043 / CIP 106854 / NCIMB 13768 / 1H11</strain>
    </source>
</reference>
<comment type="function">
    <text evidence="1">Binds directly to 23S ribosomal RNA and is necessary for the in vitro assembly process of the 50S ribosomal subunit. It is not involved in the protein synthesizing functions of that subunit.</text>
</comment>
<comment type="similarity">
    <text evidence="1">Belongs to the bacterial ribosomal protein bL20 family.</text>
</comment>
<keyword id="KW-1185">Reference proteome</keyword>
<keyword id="KW-0687">Ribonucleoprotein</keyword>
<keyword id="KW-0689">Ribosomal protein</keyword>
<keyword id="KW-0694">RNA-binding</keyword>
<keyword id="KW-0699">rRNA-binding</keyword>
<accession>Q1QWK4</accession>
<gene>
    <name evidence="1" type="primary">rplT</name>
    <name type="ordered locus">Csal_1802</name>
</gene>
<dbReference type="EMBL" id="CP000285">
    <property type="protein sequence ID" value="ABE59154.1"/>
    <property type="molecule type" value="Genomic_DNA"/>
</dbReference>
<dbReference type="RefSeq" id="WP_011507100.1">
    <property type="nucleotide sequence ID" value="NC_007963.1"/>
</dbReference>
<dbReference type="SMR" id="Q1QWK4"/>
<dbReference type="STRING" id="290398.Csal_1802"/>
<dbReference type="GeneID" id="95334515"/>
<dbReference type="KEGG" id="csa:Csal_1802"/>
<dbReference type="eggNOG" id="COG0292">
    <property type="taxonomic scope" value="Bacteria"/>
</dbReference>
<dbReference type="HOGENOM" id="CLU_123265_0_1_6"/>
<dbReference type="OrthoDB" id="9808966at2"/>
<dbReference type="Proteomes" id="UP000000239">
    <property type="component" value="Chromosome"/>
</dbReference>
<dbReference type="GO" id="GO:1990904">
    <property type="term" value="C:ribonucleoprotein complex"/>
    <property type="evidence" value="ECO:0007669"/>
    <property type="project" value="UniProtKB-KW"/>
</dbReference>
<dbReference type="GO" id="GO:0005840">
    <property type="term" value="C:ribosome"/>
    <property type="evidence" value="ECO:0007669"/>
    <property type="project" value="UniProtKB-KW"/>
</dbReference>
<dbReference type="GO" id="GO:0019843">
    <property type="term" value="F:rRNA binding"/>
    <property type="evidence" value="ECO:0007669"/>
    <property type="project" value="UniProtKB-UniRule"/>
</dbReference>
<dbReference type="GO" id="GO:0003735">
    <property type="term" value="F:structural constituent of ribosome"/>
    <property type="evidence" value="ECO:0007669"/>
    <property type="project" value="InterPro"/>
</dbReference>
<dbReference type="GO" id="GO:0000027">
    <property type="term" value="P:ribosomal large subunit assembly"/>
    <property type="evidence" value="ECO:0007669"/>
    <property type="project" value="UniProtKB-UniRule"/>
</dbReference>
<dbReference type="GO" id="GO:0006412">
    <property type="term" value="P:translation"/>
    <property type="evidence" value="ECO:0007669"/>
    <property type="project" value="InterPro"/>
</dbReference>
<dbReference type="CDD" id="cd07026">
    <property type="entry name" value="Ribosomal_L20"/>
    <property type="match status" value="1"/>
</dbReference>
<dbReference type="FunFam" id="1.10.1900.20:FF:000001">
    <property type="entry name" value="50S ribosomal protein L20"/>
    <property type="match status" value="1"/>
</dbReference>
<dbReference type="Gene3D" id="6.10.160.10">
    <property type="match status" value="1"/>
</dbReference>
<dbReference type="Gene3D" id="1.10.1900.20">
    <property type="entry name" value="Ribosomal protein L20"/>
    <property type="match status" value="1"/>
</dbReference>
<dbReference type="HAMAP" id="MF_00382">
    <property type="entry name" value="Ribosomal_bL20"/>
    <property type="match status" value="1"/>
</dbReference>
<dbReference type="InterPro" id="IPR005813">
    <property type="entry name" value="Ribosomal_bL20"/>
</dbReference>
<dbReference type="InterPro" id="IPR049946">
    <property type="entry name" value="RIBOSOMAL_L20_CS"/>
</dbReference>
<dbReference type="InterPro" id="IPR035566">
    <property type="entry name" value="Ribosomal_protein_bL20_C"/>
</dbReference>
<dbReference type="NCBIfam" id="TIGR01032">
    <property type="entry name" value="rplT_bact"/>
    <property type="match status" value="1"/>
</dbReference>
<dbReference type="PANTHER" id="PTHR10986">
    <property type="entry name" value="39S RIBOSOMAL PROTEIN L20"/>
    <property type="match status" value="1"/>
</dbReference>
<dbReference type="Pfam" id="PF00453">
    <property type="entry name" value="Ribosomal_L20"/>
    <property type="match status" value="1"/>
</dbReference>
<dbReference type="PRINTS" id="PR00062">
    <property type="entry name" value="RIBOSOMALL20"/>
</dbReference>
<dbReference type="SUPFAM" id="SSF74731">
    <property type="entry name" value="Ribosomal protein L20"/>
    <property type="match status" value="1"/>
</dbReference>
<dbReference type="PROSITE" id="PS00937">
    <property type="entry name" value="RIBOSOMAL_L20"/>
    <property type="match status" value="1"/>
</dbReference>
<name>RL20_CHRSD</name>
<organism>
    <name type="scientific">Chromohalobacter salexigens (strain ATCC BAA-138 / DSM 3043 / CIP 106854 / NCIMB 13768 / 1H11)</name>
    <dbReference type="NCBI Taxonomy" id="290398"/>
    <lineage>
        <taxon>Bacteria</taxon>
        <taxon>Pseudomonadati</taxon>
        <taxon>Pseudomonadota</taxon>
        <taxon>Gammaproteobacteria</taxon>
        <taxon>Oceanospirillales</taxon>
        <taxon>Halomonadaceae</taxon>
        <taxon>Chromohalobacter</taxon>
    </lineage>
</organism>
<evidence type="ECO:0000255" key="1">
    <source>
        <dbReference type="HAMAP-Rule" id="MF_00382"/>
    </source>
</evidence>
<evidence type="ECO:0000305" key="2"/>
<proteinExistence type="inferred from homology"/>
<sequence>MTRVKRGVVARRRHKKILKQAKGYYGARSRVFRVAKQAVIKAGQYAYRDRRQRKRQFRALWITRINAASRANGLSYSRFIAGLKKSGIEIDRKVLADLAVHEKAAFAAIVDKAKAAQ</sequence>
<protein>
    <recommendedName>
        <fullName evidence="1">Large ribosomal subunit protein bL20</fullName>
    </recommendedName>
    <alternativeName>
        <fullName evidence="2">50S ribosomal protein L20</fullName>
    </alternativeName>
</protein>